<accession>B1IPV9</accession>
<keyword id="KW-0007">Acetylation</keyword>
<keyword id="KW-0963">Cytoplasm</keyword>
<keyword id="KW-0251">Elongation factor</keyword>
<keyword id="KW-0342">GTP-binding</keyword>
<keyword id="KW-0547">Nucleotide-binding</keyword>
<keyword id="KW-0648">Protein biosynthesis</keyword>
<evidence type="ECO:0000250" key="1"/>
<evidence type="ECO:0000255" key="2">
    <source>
        <dbReference type="HAMAP-Rule" id="MF_00054"/>
    </source>
</evidence>
<reference key="1">
    <citation type="submission" date="2008-02" db="EMBL/GenBank/DDBJ databases">
        <title>Complete sequence of Escherichia coli C str. ATCC 8739.</title>
        <authorList>
            <person name="Copeland A."/>
            <person name="Lucas S."/>
            <person name="Lapidus A."/>
            <person name="Glavina del Rio T."/>
            <person name="Dalin E."/>
            <person name="Tice H."/>
            <person name="Bruce D."/>
            <person name="Goodwin L."/>
            <person name="Pitluck S."/>
            <person name="Kiss H."/>
            <person name="Brettin T."/>
            <person name="Detter J.C."/>
            <person name="Han C."/>
            <person name="Kuske C.R."/>
            <person name="Schmutz J."/>
            <person name="Larimer F."/>
            <person name="Land M."/>
            <person name="Hauser L."/>
            <person name="Kyrpides N."/>
            <person name="Mikhailova N."/>
            <person name="Ingram L."/>
            <person name="Richardson P."/>
        </authorList>
    </citation>
    <scope>NUCLEOTIDE SEQUENCE [LARGE SCALE GENOMIC DNA]</scope>
    <source>
        <strain>ATCC 8739 / DSM 1576 / NBRC 3972 / NCIMB 8545 / WDCM 00012 / Crooks</strain>
    </source>
</reference>
<feature type="chain" id="PRO_1000074958" description="Elongation factor G">
    <location>
        <begin position="1"/>
        <end position="704"/>
    </location>
</feature>
<feature type="domain" description="tr-type G">
    <location>
        <begin position="8"/>
        <end position="290"/>
    </location>
</feature>
<feature type="binding site" evidence="2">
    <location>
        <begin position="17"/>
        <end position="24"/>
    </location>
    <ligand>
        <name>GTP</name>
        <dbReference type="ChEBI" id="CHEBI:37565"/>
    </ligand>
</feature>
<feature type="binding site" evidence="2">
    <location>
        <begin position="88"/>
        <end position="92"/>
    </location>
    <ligand>
        <name>GTP</name>
        <dbReference type="ChEBI" id="CHEBI:37565"/>
    </ligand>
</feature>
<feature type="binding site" evidence="2">
    <location>
        <begin position="142"/>
        <end position="145"/>
    </location>
    <ligand>
        <name>GTP</name>
        <dbReference type="ChEBI" id="CHEBI:37565"/>
    </ligand>
</feature>
<feature type="modified residue" description="N6-acetyllysine" evidence="1">
    <location>
        <position position="504"/>
    </location>
</feature>
<feature type="modified residue" description="N6-acetyllysine" evidence="1">
    <location>
        <position position="643"/>
    </location>
</feature>
<gene>
    <name evidence="2" type="primary">fusA</name>
    <name type="ordered locus">EcolC_0373</name>
</gene>
<protein>
    <recommendedName>
        <fullName evidence="2">Elongation factor G</fullName>
        <shortName evidence="2">EF-G</shortName>
    </recommendedName>
</protein>
<proteinExistence type="inferred from homology"/>
<name>EFG_ECOLC</name>
<organism>
    <name type="scientific">Escherichia coli (strain ATCC 8739 / DSM 1576 / NBRC 3972 / NCIMB 8545 / WDCM 00012 / Crooks)</name>
    <dbReference type="NCBI Taxonomy" id="481805"/>
    <lineage>
        <taxon>Bacteria</taxon>
        <taxon>Pseudomonadati</taxon>
        <taxon>Pseudomonadota</taxon>
        <taxon>Gammaproteobacteria</taxon>
        <taxon>Enterobacterales</taxon>
        <taxon>Enterobacteriaceae</taxon>
        <taxon>Escherichia</taxon>
    </lineage>
</organism>
<comment type="function">
    <text evidence="2">Catalyzes the GTP-dependent ribosomal translocation step during translation elongation. During this step, the ribosome changes from the pre-translocational (PRE) to the post-translocational (POST) state as the newly formed A-site-bound peptidyl-tRNA and P-site-bound deacylated tRNA move to the P and E sites, respectively. Catalyzes the coordinated movement of the two tRNA molecules, the mRNA and conformational changes in the ribosome.</text>
</comment>
<comment type="subcellular location">
    <subcellularLocation>
        <location evidence="2">Cytoplasm</location>
    </subcellularLocation>
</comment>
<comment type="similarity">
    <text evidence="2">Belongs to the TRAFAC class translation factor GTPase superfamily. Classic translation factor GTPase family. EF-G/EF-2 subfamily.</text>
</comment>
<dbReference type="EMBL" id="CP000946">
    <property type="protein sequence ID" value="ACA76051.1"/>
    <property type="molecule type" value="Genomic_DNA"/>
</dbReference>
<dbReference type="RefSeq" id="WP_000124700.1">
    <property type="nucleotide sequence ID" value="NZ_MTFT01000001.1"/>
</dbReference>
<dbReference type="SMR" id="B1IPV9"/>
<dbReference type="GeneID" id="93778658"/>
<dbReference type="KEGG" id="ecl:EcolC_0373"/>
<dbReference type="HOGENOM" id="CLU_002794_4_1_6"/>
<dbReference type="GO" id="GO:0005737">
    <property type="term" value="C:cytoplasm"/>
    <property type="evidence" value="ECO:0007669"/>
    <property type="project" value="UniProtKB-SubCell"/>
</dbReference>
<dbReference type="GO" id="GO:0005525">
    <property type="term" value="F:GTP binding"/>
    <property type="evidence" value="ECO:0007669"/>
    <property type="project" value="UniProtKB-UniRule"/>
</dbReference>
<dbReference type="GO" id="GO:0003924">
    <property type="term" value="F:GTPase activity"/>
    <property type="evidence" value="ECO:0007669"/>
    <property type="project" value="InterPro"/>
</dbReference>
<dbReference type="GO" id="GO:0097216">
    <property type="term" value="F:guanosine tetraphosphate binding"/>
    <property type="evidence" value="ECO:0007669"/>
    <property type="project" value="UniProtKB-ARBA"/>
</dbReference>
<dbReference type="GO" id="GO:0003746">
    <property type="term" value="F:translation elongation factor activity"/>
    <property type="evidence" value="ECO:0007669"/>
    <property type="project" value="UniProtKB-UniRule"/>
</dbReference>
<dbReference type="GO" id="GO:0032790">
    <property type="term" value="P:ribosome disassembly"/>
    <property type="evidence" value="ECO:0007669"/>
    <property type="project" value="TreeGrafter"/>
</dbReference>
<dbReference type="CDD" id="cd01886">
    <property type="entry name" value="EF-G"/>
    <property type="match status" value="1"/>
</dbReference>
<dbReference type="CDD" id="cd16262">
    <property type="entry name" value="EFG_III"/>
    <property type="match status" value="1"/>
</dbReference>
<dbReference type="CDD" id="cd01434">
    <property type="entry name" value="EFG_mtEFG1_IV"/>
    <property type="match status" value="1"/>
</dbReference>
<dbReference type="CDD" id="cd03713">
    <property type="entry name" value="EFG_mtEFG_C"/>
    <property type="match status" value="1"/>
</dbReference>
<dbReference type="CDD" id="cd04088">
    <property type="entry name" value="EFG_mtEFG_II"/>
    <property type="match status" value="1"/>
</dbReference>
<dbReference type="FunFam" id="2.40.30.10:FF:000006">
    <property type="entry name" value="Elongation factor G"/>
    <property type="match status" value="1"/>
</dbReference>
<dbReference type="FunFam" id="3.30.230.10:FF:000003">
    <property type="entry name" value="Elongation factor G"/>
    <property type="match status" value="1"/>
</dbReference>
<dbReference type="FunFam" id="3.30.70.240:FF:000001">
    <property type="entry name" value="Elongation factor G"/>
    <property type="match status" value="1"/>
</dbReference>
<dbReference type="FunFam" id="3.30.70.870:FF:000001">
    <property type="entry name" value="Elongation factor G"/>
    <property type="match status" value="1"/>
</dbReference>
<dbReference type="FunFam" id="3.40.50.300:FF:000029">
    <property type="entry name" value="Elongation factor G"/>
    <property type="match status" value="1"/>
</dbReference>
<dbReference type="Gene3D" id="3.30.230.10">
    <property type="match status" value="1"/>
</dbReference>
<dbReference type="Gene3D" id="3.30.70.240">
    <property type="match status" value="1"/>
</dbReference>
<dbReference type="Gene3D" id="3.30.70.870">
    <property type="entry name" value="Elongation Factor G (Translational Gtpase), domain 3"/>
    <property type="match status" value="1"/>
</dbReference>
<dbReference type="Gene3D" id="3.40.50.300">
    <property type="entry name" value="P-loop containing nucleotide triphosphate hydrolases"/>
    <property type="match status" value="1"/>
</dbReference>
<dbReference type="Gene3D" id="2.40.30.10">
    <property type="entry name" value="Translation factors"/>
    <property type="match status" value="1"/>
</dbReference>
<dbReference type="HAMAP" id="MF_00054_B">
    <property type="entry name" value="EF_G_EF_2_B"/>
    <property type="match status" value="1"/>
</dbReference>
<dbReference type="InterPro" id="IPR041095">
    <property type="entry name" value="EFG_II"/>
</dbReference>
<dbReference type="InterPro" id="IPR009022">
    <property type="entry name" value="EFG_III"/>
</dbReference>
<dbReference type="InterPro" id="IPR035647">
    <property type="entry name" value="EFG_III/V"/>
</dbReference>
<dbReference type="InterPro" id="IPR047872">
    <property type="entry name" value="EFG_IV"/>
</dbReference>
<dbReference type="InterPro" id="IPR035649">
    <property type="entry name" value="EFG_V"/>
</dbReference>
<dbReference type="InterPro" id="IPR000640">
    <property type="entry name" value="EFG_V-like"/>
</dbReference>
<dbReference type="InterPro" id="IPR004161">
    <property type="entry name" value="EFTu-like_2"/>
</dbReference>
<dbReference type="InterPro" id="IPR031157">
    <property type="entry name" value="G_TR_CS"/>
</dbReference>
<dbReference type="InterPro" id="IPR027417">
    <property type="entry name" value="P-loop_NTPase"/>
</dbReference>
<dbReference type="InterPro" id="IPR020568">
    <property type="entry name" value="Ribosomal_Su5_D2-typ_SF"/>
</dbReference>
<dbReference type="InterPro" id="IPR014721">
    <property type="entry name" value="Ribsml_uS5_D2-typ_fold_subgr"/>
</dbReference>
<dbReference type="InterPro" id="IPR005225">
    <property type="entry name" value="Small_GTP-bd"/>
</dbReference>
<dbReference type="InterPro" id="IPR000795">
    <property type="entry name" value="T_Tr_GTP-bd_dom"/>
</dbReference>
<dbReference type="InterPro" id="IPR009000">
    <property type="entry name" value="Transl_B-barrel_sf"/>
</dbReference>
<dbReference type="InterPro" id="IPR004540">
    <property type="entry name" value="Transl_elong_EFG/EF2"/>
</dbReference>
<dbReference type="InterPro" id="IPR005517">
    <property type="entry name" value="Transl_elong_EFG/EF2_IV"/>
</dbReference>
<dbReference type="NCBIfam" id="TIGR00484">
    <property type="entry name" value="EF-G"/>
    <property type="match status" value="1"/>
</dbReference>
<dbReference type="NCBIfam" id="NF009381">
    <property type="entry name" value="PRK12740.1-5"/>
    <property type="match status" value="1"/>
</dbReference>
<dbReference type="NCBIfam" id="TIGR00231">
    <property type="entry name" value="small_GTP"/>
    <property type="match status" value="1"/>
</dbReference>
<dbReference type="PANTHER" id="PTHR43261:SF1">
    <property type="entry name" value="RIBOSOME-RELEASING FACTOR 2, MITOCHONDRIAL"/>
    <property type="match status" value="1"/>
</dbReference>
<dbReference type="PANTHER" id="PTHR43261">
    <property type="entry name" value="TRANSLATION ELONGATION FACTOR G-RELATED"/>
    <property type="match status" value="1"/>
</dbReference>
<dbReference type="Pfam" id="PF00679">
    <property type="entry name" value="EFG_C"/>
    <property type="match status" value="1"/>
</dbReference>
<dbReference type="Pfam" id="PF14492">
    <property type="entry name" value="EFG_III"/>
    <property type="match status" value="1"/>
</dbReference>
<dbReference type="Pfam" id="PF03764">
    <property type="entry name" value="EFG_IV"/>
    <property type="match status" value="1"/>
</dbReference>
<dbReference type="Pfam" id="PF00009">
    <property type="entry name" value="GTP_EFTU"/>
    <property type="match status" value="1"/>
</dbReference>
<dbReference type="Pfam" id="PF03144">
    <property type="entry name" value="GTP_EFTU_D2"/>
    <property type="match status" value="1"/>
</dbReference>
<dbReference type="PRINTS" id="PR00315">
    <property type="entry name" value="ELONGATNFCT"/>
</dbReference>
<dbReference type="SMART" id="SM00838">
    <property type="entry name" value="EFG_C"/>
    <property type="match status" value="1"/>
</dbReference>
<dbReference type="SMART" id="SM00889">
    <property type="entry name" value="EFG_IV"/>
    <property type="match status" value="1"/>
</dbReference>
<dbReference type="SUPFAM" id="SSF54980">
    <property type="entry name" value="EF-G C-terminal domain-like"/>
    <property type="match status" value="2"/>
</dbReference>
<dbReference type="SUPFAM" id="SSF52540">
    <property type="entry name" value="P-loop containing nucleoside triphosphate hydrolases"/>
    <property type="match status" value="1"/>
</dbReference>
<dbReference type="SUPFAM" id="SSF54211">
    <property type="entry name" value="Ribosomal protein S5 domain 2-like"/>
    <property type="match status" value="1"/>
</dbReference>
<dbReference type="SUPFAM" id="SSF50447">
    <property type="entry name" value="Translation proteins"/>
    <property type="match status" value="1"/>
</dbReference>
<dbReference type="PROSITE" id="PS00301">
    <property type="entry name" value="G_TR_1"/>
    <property type="match status" value="1"/>
</dbReference>
<dbReference type="PROSITE" id="PS51722">
    <property type="entry name" value="G_TR_2"/>
    <property type="match status" value="1"/>
</dbReference>
<sequence length="704" mass="77581">MARTTPIARYRNIGISAHIDAGKTTTTERILFYTGVNHKIGEVHDGAATMDWMEQEQERGITITSAATTAFWSGMAKQYEPHRINIIDTPGHVDFTIEVERSMRVLDGAVMVYCAVGGVQPQSETVWRQANKYKVPRIAFVNKMDRMGANFLKVVNQIKTRLGANPVPLQLAIGAEEHFTGVVDLVKMKAINWNDADQGVTFEYEDIPADMVELANEWHQNLIESAAEASEELMEKYLGGEELTEAEIKGALRQRVLNNEIILVTCGSAFKNKGVQAMLDAVIDYLPSPVDVPAINGILDDGKDTPAERHASDDEPFSALAFKIATDPFVGNLTFFRVYSGVVNSGDTVLNSVKAARERFGRIVQMHANKREEIKEVRAGDIAAAIGLKDVTTGDTLCDPDAPIILERMEFPEPVISIAVEPKTKADQEKMGLALGRLAKEDPSFRVWTDEESNQTIIAGMGELHLDIIVDRMKREFNVEANVGKPQVAYRETIRQKVTDVEGKHAKQSGGRGQYGHVVIDMYPLEPGSNPKGYEFINDIKGGVIPGEYIPAVDKGIQEQLKAGPLAGYPVVDMGIRLHFGSYHDVDSSELAFKLAASIAFKEGFKKAKPVLLEPIMKVEVETPEENTGDVIGDLSRRRGMLKGQESEVTGVKIHAEVPLSEMFGYATQLRSLTKGRASYTMEFLKYDEAPSNVAQAVIEARGK</sequence>